<sequence length="157" mass="17369">MEKVPMTAGGYQTLDEELKRLKTIERPAVIAAISEARQHGDLSENAEYHAAKERQGWIEGRIAEIEDKIARAQVIDVSKLSGKQVKFGATVSVVDEDTEEESRYQIVGDHEADVKEGRISLSSPLSRAMIGKEVGEVVEVYTPGGVKAYEILKVEWV</sequence>
<dbReference type="EMBL" id="CP000927">
    <property type="protein sequence ID" value="ABZ73413.1"/>
    <property type="molecule type" value="Genomic_DNA"/>
</dbReference>
<dbReference type="SMR" id="B0SZ84"/>
<dbReference type="STRING" id="366602.Caul_4293"/>
<dbReference type="KEGG" id="cak:Caul_4293"/>
<dbReference type="eggNOG" id="COG0782">
    <property type="taxonomic scope" value="Bacteria"/>
</dbReference>
<dbReference type="HOGENOM" id="CLU_101379_2_0_5"/>
<dbReference type="OrthoDB" id="9808774at2"/>
<dbReference type="GO" id="GO:0003677">
    <property type="term" value="F:DNA binding"/>
    <property type="evidence" value="ECO:0007669"/>
    <property type="project" value="UniProtKB-UniRule"/>
</dbReference>
<dbReference type="GO" id="GO:0070063">
    <property type="term" value="F:RNA polymerase binding"/>
    <property type="evidence" value="ECO:0007669"/>
    <property type="project" value="InterPro"/>
</dbReference>
<dbReference type="GO" id="GO:0006354">
    <property type="term" value="P:DNA-templated transcription elongation"/>
    <property type="evidence" value="ECO:0007669"/>
    <property type="project" value="TreeGrafter"/>
</dbReference>
<dbReference type="GO" id="GO:0032784">
    <property type="term" value="P:regulation of DNA-templated transcription elongation"/>
    <property type="evidence" value="ECO:0007669"/>
    <property type="project" value="UniProtKB-UniRule"/>
</dbReference>
<dbReference type="FunFam" id="1.10.287.180:FF:000001">
    <property type="entry name" value="Transcription elongation factor GreA"/>
    <property type="match status" value="1"/>
</dbReference>
<dbReference type="FunFam" id="3.10.50.30:FF:000001">
    <property type="entry name" value="Transcription elongation factor GreA"/>
    <property type="match status" value="1"/>
</dbReference>
<dbReference type="Gene3D" id="3.10.50.30">
    <property type="entry name" value="Transcription elongation factor, GreA/GreB, C-terminal domain"/>
    <property type="match status" value="1"/>
</dbReference>
<dbReference type="Gene3D" id="1.10.287.180">
    <property type="entry name" value="Transcription elongation factor, GreA/GreB, N-terminal domain"/>
    <property type="match status" value="1"/>
</dbReference>
<dbReference type="HAMAP" id="MF_00105">
    <property type="entry name" value="GreA_GreB"/>
    <property type="match status" value="1"/>
</dbReference>
<dbReference type="InterPro" id="IPR036953">
    <property type="entry name" value="GreA/GreB_C_sf"/>
</dbReference>
<dbReference type="InterPro" id="IPR018151">
    <property type="entry name" value="TF_GreA/GreB_CS"/>
</dbReference>
<dbReference type="InterPro" id="IPR006359">
    <property type="entry name" value="Tscrpt_elong_fac_GreA"/>
</dbReference>
<dbReference type="InterPro" id="IPR028624">
    <property type="entry name" value="Tscrpt_elong_fac_GreA/B"/>
</dbReference>
<dbReference type="InterPro" id="IPR001437">
    <property type="entry name" value="Tscrpt_elong_fac_GreA/B_C"/>
</dbReference>
<dbReference type="InterPro" id="IPR023459">
    <property type="entry name" value="Tscrpt_elong_fac_GreA/B_fam"/>
</dbReference>
<dbReference type="InterPro" id="IPR022691">
    <property type="entry name" value="Tscrpt_elong_fac_GreA/B_N"/>
</dbReference>
<dbReference type="InterPro" id="IPR036805">
    <property type="entry name" value="Tscrpt_elong_fac_GreA/B_N_sf"/>
</dbReference>
<dbReference type="NCBIfam" id="TIGR01462">
    <property type="entry name" value="greA"/>
    <property type="match status" value="1"/>
</dbReference>
<dbReference type="NCBIfam" id="NF001261">
    <property type="entry name" value="PRK00226.1-2"/>
    <property type="match status" value="1"/>
</dbReference>
<dbReference type="NCBIfam" id="NF001263">
    <property type="entry name" value="PRK00226.1-4"/>
    <property type="match status" value="1"/>
</dbReference>
<dbReference type="NCBIfam" id="NF001264">
    <property type="entry name" value="PRK00226.1-5"/>
    <property type="match status" value="1"/>
</dbReference>
<dbReference type="PANTHER" id="PTHR30437">
    <property type="entry name" value="TRANSCRIPTION ELONGATION FACTOR GREA"/>
    <property type="match status" value="1"/>
</dbReference>
<dbReference type="PANTHER" id="PTHR30437:SF4">
    <property type="entry name" value="TRANSCRIPTION ELONGATION FACTOR GREA"/>
    <property type="match status" value="1"/>
</dbReference>
<dbReference type="Pfam" id="PF01272">
    <property type="entry name" value="GreA_GreB"/>
    <property type="match status" value="1"/>
</dbReference>
<dbReference type="Pfam" id="PF03449">
    <property type="entry name" value="GreA_GreB_N"/>
    <property type="match status" value="1"/>
</dbReference>
<dbReference type="PIRSF" id="PIRSF006092">
    <property type="entry name" value="GreA_GreB"/>
    <property type="match status" value="1"/>
</dbReference>
<dbReference type="SUPFAM" id="SSF54534">
    <property type="entry name" value="FKBP-like"/>
    <property type="match status" value="1"/>
</dbReference>
<dbReference type="SUPFAM" id="SSF46557">
    <property type="entry name" value="GreA transcript cleavage protein, N-terminal domain"/>
    <property type="match status" value="1"/>
</dbReference>
<dbReference type="PROSITE" id="PS00829">
    <property type="entry name" value="GREAB_1"/>
    <property type="match status" value="1"/>
</dbReference>
<keyword id="KW-0238">DNA-binding</keyword>
<keyword id="KW-0804">Transcription</keyword>
<keyword id="KW-0805">Transcription regulation</keyword>
<evidence type="ECO:0000255" key="1">
    <source>
        <dbReference type="HAMAP-Rule" id="MF_00105"/>
    </source>
</evidence>
<accession>B0SZ84</accession>
<protein>
    <recommendedName>
        <fullName evidence="1">Transcription elongation factor GreA</fullName>
    </recommendedName>
    <alternativeName>
        <fullName evidence="1">Transcript cleavage factor GreA</fullName>
    </alternativeName>
</protein>
<comment type="function">
    <text evidence="1">Necessary for efficient RNA polymerase transcription elongation past template-encoded arresting sites. The arresting sites in DNA have the property of trapping a certain fraction of elongating RNA polymerases that pass through, resulting in locked ternary complexes. Cleavage of the nascent transcript by cleavage factors such as GreA or GreB allows the resumption of elongation from the new 3'terminus. GreA releases sequences of 2 to 3 nucleotides.</text>
</comment>
<comment type="similarity">
    <text evidence="1">Belongs to the GreA/GreB family.</text>
</comment>
<gene>
    <name evidence="1" type="primary">greA</name>
    <name type="ordered locus">Caul_4293</name>
</gene>
<reference key="1">
    <citation type="submission" date="2008-01" db="EMBL/GenBank/DDBJ databases">
        <title>Complete sequence of chromosome of Caulobacter sp. K31.</title>
        <authorList>
            <consortium name="US DOE Joint Genome Institute"/>
            <person name="Copeland A."/>
            <person name="Lucas S."/>
            <person name="Lapidus A."/>
            <person name="Barry K."/>
            <person name="Glavina del Rio T."/>
            <person name="Dalin E."/>
            <person name="Tice H."/>
            <person name="Pitluck S."/>
            <person name="Bruce D."/>
            <person name="Goodwin L."/>
            <person name="Thompson L.S."/>
            <person name="Brettin T."/>
            <person name="Detter J.C."/>
            <person name="Han C."/>
            <person name="Schmutz J."/>
            <person name="Larimer F."/>
            <person name="Land M."/>
            <person name="Hauser L."/>
            <person name="Kyrpides N."/>
            <person name="Kim E."/>
            <person name="Stephens C."/>
            <person name="Richardson P."/>
        </authorList>
    </citation>
    <scope>NUCLEOTIDE SEQUENCE [LARGE SCALE GENOMIC DNA]</scope>
    <source>
        <strain>K31</strain>
    </source>
</reference>
<proteinExistence type="inferred from homology"/>
<feature type="chain" id="PRO_1000075870" description="Transcription elongation factor GreA">
    <location>
        <begin position="1"/>
        <end position="157"/>
    </location>
</feature>
<name>GREA_CAUSK</name>
<organism>
    <name type="scientific">Caulobacter sp. (strain K31)</name>
    <dbReference type="NCBI Taxonomy" id="366602"/>
    <lineage>
        <taxon>Bacteria</taxon>
        <taxon>Pseudomonadati</taxon>
        <taxon>Pseudomonadota</taxon>
        <taxon>Alphaproteobacteria</taxon>
        <taxon>Caulobacterales</taxon>
        <taxon>Caulobacteraceae</taxon>
        <taxon>Caulobacter</taxon>
    </lineage>
</organism>